<protein>
    <recommendedName>
        <fullName evidence="7">Probable biotin-dependent acyl-coenzyme A carboxylase beta3 subunit</fullName>
        <ecNumber evidence="1">2.1.3.-</ecNumber>
    </recommendedName>
</protein>
<proteinExistence type="evidence at protein level"/>
<organism>
    <name type="scientific">Mycobacterium tuberculosis (strain ATCC 25618 / H37Rv)</name>
    <dbReference type="NCBI Taxonomy" id="83332"/>
    <lineage>
        <taxon>Bacteria</taxon>
        <taxon>Bacillati</taxon>
        <taxon>Actinomycetota</taxon>
        <taxon>Actinomycetes</taxon>
        <taxon>Mycobacteriales</taxon>
        <taxon>Mycobacteriaceae</taxon>
        <taxon>Mycobacterium</taxon>
        <taxon>Mycobacterium tuberculosis complex</taxon>
    </lineage>
</organism>
<keyword id="KW-1185">Reference proteome</keyword>
<keyword id="KW-0808">Transferase</keyword>
<comment type="function">
    <text evidence="1">Component of a biotin-dependent acyl-CoA carboxylase complex. This subunit transfers the CO2 from carboxybiotin to the CoA ester substrate.</text>
</comment>
<comment type="subunit">
    <text evidence="1">The biotin-dependent acyl-CoA carboxylase complex is composed of an AccA protein, which contains the biotin carboxylase (BC) and biotin carboxyl carrier protein (BCCP) domains, and an AccD protein, which contains the carboxyl transferase (CT) domain.</text>
</comment>
<comment type="induction">
    <text evidence="5">Does not show significant changes in expression throughout M.tuberculosis growth phases.</text>
</comment>
<comment type="disruption phenotype">
    <text evidence="4">Not essential for growth.</text>
</comment>
<comment type="miscellaneous">
    <text evidence="6">Was identified as a high-confidence drug target.</text>
</comment>
<comment type="similarity">
    <text evidence="7">Belongs to the AccD/PCCB family.</text>
</comment>
<dbReference type="EC" id="2.1.3.-" evidence="1"/>
<dbReference type="EMBL" id="AL123456">
    <property type="protein sequence ID" value="CCP43652.1"/>
    <property type="molecule type" value="Genomic_DNA"/>
</dbReference>
<dbReference type="PIR" id="E70783">
    <property type="entry name" value="E70783"/>
</dbReference>
<dbReference type="RefSeq" id="NP_215419.1">
    <property type="nucleotide sequence ID" value="NC_000962.3"/>
</dbReference>
<dbReference type="RefSeq" id="WP_003404691.1">
    <property type="nucleotide sequence ID" value="NZ_NVQJ01000001.1"/>
</dbReference>
<dbReference type="SMR" id="P9WQH9"/>
<dbReference type="FunCoup" id="P9WQH9">
    <property type="interactions" value="18"/>
</dbReference>
<dbReference type="STRING" id="83332.Rv0904c"/>
<dbReference type="PaxDb" id="83332-Rv0904c"/>
<dbReference type="DNASU" id="885279"/>
<dbReference type="GeneID" id="885279"/>
<dbReference type="KEGG" id="mtu:Rv0904c"/>
<dbReference type="KEGG" id="mtv:RVBD_0904c"/>
<dbReference type="TubercuList" id="Rv0904c"/>
<dbReference type="eggNOG" id="COG0777">
    <property type="taxonomic scope" value="Bacteria"/>
</dbReference>
<dbReference type="eggNOG" id="COG0825">
    <property type="taxonomic scope" value="Bacteria"/>
</dbReference>
<dbReference type="InParanoid" id="P9WQH9"/>
<dbReference type="OrthoDB" id="9772975at2"/>
<dbReference type="PhylomeDB" id="P9WQH9"/>
<dbReference type="Proteomes" id="UP000001584">
    <property type="component" value="Chromosome"/>
</dbReference>
<dbReference type="GO" id="GO:0009317">
    <property type="term" value="C:acetyl-CoA carboxylase complex"/>
    <property type="evidence" value="ECO:0007669"/>
    <property type="project" value="InterPro"/>
</dbReference>
<dbReference type="GO" id="GO:0005886">
    <property type="term" value="C:plasma membrane"/>
    <property type="evidence" value="ECO:0007005"/>
    <property type="project" value="MTBBASE"/>
</dbReference>
<dbReference type="GO" id="GO:0003989">
    <property type="term" value="F:acetyl-CoA carboxylase activity"/>
    <property type="evidence" value="ECO:0007669"/>
    <property type="project" value="InterPro"/>
</dbReference>
<dbReference type="GO" id="GO:0016740">
    <property type="term" value="F:transferase activity"/>
    <property type="evidence" value="ECO:0007669"/>
    <property type="project" value="UniProtKB-KW"/>
</dbReference>
<dbReference type="GO" id="GO:0071768">
    <property type="term" value="P:mycolic acid biosynthetic process"/>
    <property type="evidence" value="ECO:0000315"/>
    <property type="project" value="MTBBASE"/>
</dbReference>
<dbReference type="FunFam" id="3.90.226.10:FF:000108">
    <property type="entry name" value="Acetyl-coenzyme A carboxylase carboxyl transferase subunit beta"/>
    <property type="match status" value="1"/>
</dbReference>
<dbReference type="Gene3D" id="3.90.226.10">
    <property type="entry name" value="2-enoyl-CoA Hydratase, Chain A, domain 1"/>
    <property type="match status" value="2"/>
</dbReference>
<dbReference type="InterPro" id="IPR034733">
    <property type="entry name" value="AcCoA_carboxyl_beta"/>
</dbReference>
<dbReference type="InterPro" id="IPR000438">
    <property type="entry name" value="Acetyl_CoA_COase_Trfase_b_su"/>
</dbReference>
<dbReference type="InterPro" id="IPR029045">
    <property type="entry name" value="ClpP/crotonase-like_dom_sf"/>
</dbReference>
<dbReference type="InterPro" id="IPR011763">
    <property type="entry name" value="COA_CT_C"/>
</dbReference>
<dbReference type="InterPro" id="IPR011762">
    <property type="entry name" value="COA_CT_N"/>
</dbReference>
<dbReference type="PANTHER" id="PTHR42995">
    <property type="entry name" value="ACETYL-COENZYME A CARBOXYLASE CARBOXYL TRANSFERASE SUBUNIT BETA, CHLOROPLASTIC"/>
    <property type="match status" value="1"/>
</dbReference>
<dbReference type="PANTHER" id="PTHR42995:SF5">
    <property type="entry name" value="ACETYL-COENZYME A CARBOXYLASE CARBOXYL TRANSFERASE SUBUNIT BETA, CHLOROPLASTIC"/>
    <property type="match status" value="1"/>
</dbReference>
<dbReference type="Pfam" id="PF01039">
    <property type="entry name" value="Carboxyl_trans"/>
    <property type="match status" value="1"/>
</dbReference>
<dbReference type="PRINTS" id="PR01070">
    <property type="entry name" value="ACCCTRFRASEB"/>
</dbReference>
<dbReference type="SUPFAM" id="SSF52096">
    <property type="entry name" value="ClpP/crotonase"/>
    <property type="match status" value="2"/>
</dbReference>
<dbReference type="PROSITE" id="PS50989">
    <property type="entry name" value="COA_CT_CTER"/>
    <property type="match status" value="1"/>
</dbReference>
<dbReference type="PROSITE" id="PS50980">
    <property type="entry name" value="COA_CT_NTER"/>
    <property type="match status" value="1"/>
</dbReference>
<feature type="chain" id="PRO_0000199773" description="Probable biotin-dependent acyl-coenzyme A carboxylase beta3 subunit">
    <location>
        <begin position="1"/>
        <end position="495"/>
    </location>
</feature>
<feature type="domain" description="CoA carboxyltransferase N-terminal" evidence="2">
    <location>
        <begin position="1"/>
        <end position="236"/>
    </location>
</feature>
<feature type="domain" description="CoA carboxyltransferase C-terminal" evidence="3">
    <location>
        <begin position="242"/>
        <end position="470"/>
    </location>
</feature>
<reference key="1">
    <citation type="journal article" date="1998" name="Nature">
        <title>Deciphering the biology of Mycobacterium tuberculosis from the complete genome sequence.</title>
        <authorList>
            <person name="Cole S.T."/>
            <person name="Brosch R."/>
            <person name="Parkhill J."/>
            <person name="Garnier T."/>
            <person name="Churcher C.M."/>
            <person name="Harris D.E."/>
            <person name="Gordon S.V."/>
            <person name="Eiglmeier K."/>
            <person name="Gas S."/>
            <person name="Barry C.E. III"/>
            <person name="Tekaia F."/>
            <person name="Badcock K."/>
            <person name="Basham D."/>
            <person name="Brown D."/>
            <person name="Chillingworth T."/>
            <person name="Connor R."/>
            <person name="Davies R.M."/>
            <person name="Devlin K."/>
            <person name="Feltwell T."/>
            <person name="Gentles S."/>
            <person name="Hamlin N."/>
            <person name="Holroyd S."/>
            <person name="Hornsby T."/>
            <person name="Jagels K."/>
            <person name="Krogh A."/>
            <person name="McLean J."/>
            <person name="Moule S."/>
            <person name="Murphy L.D."/>
            <person name="Oliver S."/>
            <person name="Osborne J."/>
            <person name="Quail M.A."/>
            <person name="Rajandream M.A."/>
            <person name="Rogers J."/>
            <person name="Rutter S."/>
            <person name="Seeger K."/>
            <person name="Skelton S."/>
            <person name="Squares S."/>
            <person name="Squares R."/>
            <person name="Sulston J.E."/>
            <person name="Taylor K."/>
            <person name="Whitehead S."/>
            <person name="Barrell B.G."/>
        </authorList>
    </citation>
    <scope>NUCLEOTIDE SEQUENCE [LARGE SCALE GENOMIC DNA]</scope>
    <source>
        <strain>ATCC 25618 / H37Rv</strain>
    </source>
</reference>
<reference key="2">
    <citation type="journal article" date="2003" name="Mol. Microbiol.">
        <title>Genes required for mycobacterial growth defined by high density mutagenesis.</title>
        <authorList>
            <person name="Sassetti C.M."/>
            <person name="Boyd D.H."/>
            <person name="Rubin E.J."/>
        </authorList>
    </citation>
    <scope>DISRUPTION PHENOTYPE</scope>
</reference>
<reference key="3">
    <citation type="journal article" date="2007" name="J. Bacteriol.">
        <title>AccD6, a member of the Fas II locus, is a functional carboxyltransferase subunit of the acyl-coenzyme A carboxylase in Mycobacterium tuberculosis.</title>
        <authorList>
            <person name="Daniel J."/>
            <person name="Oh T.J."/>
            <person name="Lee C.M."/>
            <person name="Kolattukudy P.E."/>
        </authorList>
    </citation>
    <scope>INDUCTION</scope>
    <source>
        <strain>H37Rv</strain>
    </source>
</reference>
<reference key="4">
    <citation type="journal article" date="2008" name="BMC Syst. Biol.">
        <title>targetTB: a target identification pipeline for Mycobacterium tuberculosis through an interactome, reactome and genome-scale structural analysis.</title>
        <authorList>
            <person name="Raman K."/>
            <person name="Yeturu K."/>
            <person name="Chandra N."/>
        </authorList>
    </citation>
    <scope>IDENTIFICATION AS A DRUG TARGET [LARGE SCALE ANALYSIS]</scope>
</reference>
<reference key="5">
    <citation type="journal article" date="2011" name="Mol. Cell. Proteomics">
        <title>Proteogenomic analysis of Mycobacterium tuberculosis by high resolution mass spectrometry.</title>
        <authorList>
            <person name="Kelkar D.S."/>
            <person name="Kumar D."/>
            <person name="Kumar P."/>
            <person name="Balakrishnan L."/>
            <person name="Muthusamy B."/>
            <person name="Yadav A.K."/>
            <person name="Shrivastava P."/>
            <person name="Marimuthu A."/>
            <person name="Anand S."/>
            <person name="Sundaram H."/>
            <person name="Kingsbury R."/>
            <person name="Harsha H.C."/>
            <person name="Nair B."/>
            <person name="Prasad T.S."/>
            <person name="Chauhan D.S."/>
            <person name="Katoch K."/>
            <person name="Katoch V.M."/>
            <person name="Kumar P."/>
            <person name="Chaerkady R."/>
            <person name="Ramachandran S."/>
            <person name="Dash D."/>
            <person name="Pandey A."/>
        </authorList>
    </citation>
    <scope>IDENTIFICATION BY MASS SPECTROMETRY [LARGE SCALE ANALYSIS]</scope>
    <source>
        <strain>ATCC 25618 / H37Rv</strain>
    </source>
</reference>
<accession>P9WQH9</accession>
<accession>L0T824</accession>
<accession>P63405</accession>
<accession>Q10561</accession>
<name>ACCD3_MYCTU</name>
<gene>
    <name type="primary">accD3</name>
    <name type="ordered locus">Rv0904c</name>
    <name type="ORF">MTCY31.32c</name>
</gene>
<sequence>MSRITTDQLRHAVLDRGSFVSWDSEPLAVPVADSYARELAAARAATGADESVQTGEGRVFGRRVAVVACEFDFLGGSIGVAAAERITAAVERATAERLPLLASPSSGGTRMQEGTVAFLQMVKIAAAIQLHNQARLPYLVYLRHPTTGGVFASWGSLGHLTVAEPGALIGFLGPRVYELLYGDPFPSGVQTAENLRRHGIIDGVVALDRLRPMLDRALTVLIDAPEPLPAPQTPAPVPDVPTWDSVVASRRPDRPGVRQLLRHGATDRVLLSGTDQGEAATTLLALARFGGQPTVVLGQQRAVGGGGSTVGPAALREARRGMALAAELCLPLVLVIDAAGPALSAAAEQGGLAGQIAHCLAELVTLDTPTVSILLGQGSGGPALAMLPADRVLAALHGWLAPLPPEGASAIVFRDTAHAAELAAAQGIRSADLLKSGIVDTIVPEYPDAADEPIEFALRLSNAIAAEVHALRKIPAPERLATRLQRYRRIGLPRD</sequence>
<evidence type="ECO:0000250" key="1">
    <source>
        <dbReference type="UniProtKB" id="O53578"/>
    </source>
</evidence>
<evidence type="ECO:0000255" key="2">
    <source>
        <dbReference type="PROSITE-ProRule" id="PRU01136"/>
    </source>
</evidence>
<evidence type="ECO:0000255" key="3">
    <source>
        <dbReference type="PROSITE-ProRule" id="PRU01137"/>
    </source>
</evidence>
<evidence type="ECO:0000269" key="4">
    <source>
    </source>
</evidence>
<evidence type="ECO:0000269" key="5">
    <source>
    </source>
</evidence>
<evidence type="ECO:0000269" key="6">
    <source>
    </source>
</evidence>
<evidence type="ECO:0000305" key="7"/>